<proteinExistence type="inferred from homology"/>
<evidence type="ECO:0000255" key="1">
    <source>
        <dbReference type="HAMAP-Rule" id="MF_00173"/>
    </source>
</evidence>
<evidence type="ECO:0000305" key="2"/>
<reference key="1">
    <citation type="journal article" date="2000" name="Nature">
        <title>DNA sequence of both chromosomes of the cholera pathogen Vibrio cholerae.</title>
        <authorList>
            <person name="Heidelberg J.F."/>
            <person name="Eisen J.A."/>
            <person name="Nelson W.C."/>
            <person name="Clayton R.A."/>
            <person name="Gwinn M.L."/>
            <person name="Dodson R.J."/>
            <person name="Haft D.H."/>
            <person name="Hickey E.K."/>
            <person name="Peterson J.D."/>
            <person name="Umayam L.A."/>
            <person name="Gill S.R."/>
            <person name="Nelson K.E."/>
            <person name="Read T.D."/>
            <person name="Tettelin H."/>
            <person name="Richardson D.L."/>
            <person name="Ermolaeva M.D."/>
            <person name="Vamathevan J.J."/>
            <person name="Bass S."/>
            <person name="Qin H."/>
            <person name="Dragoi I."/>
            <person name="Sellers P."/>
            <person name="McDonald L.A."/>
            <person name="Utterback T.R."/>
            <person name="Fleischmann R.D."/>
            <person name="Nierman W.C."/>
            <person name="White O."/>
            <person name="Salzberg S.L."/>
            <person name="Smith H.O."/>
            <person name="Colwell R.R."/>
            <person name="Mekalanos J.J."/>
            <person name="Venter J.C."/>
            <person name="Fraser C.M."/>
        </authorList>
    </citation>
    <scope>NUCLEOTIDE SEQUENCE [LARGE SCALE GENOMIC DNA]</scope>
    <source>
        <strain>ATCC 39315 / El Tor Inaba N16961</strain>
    </source>
</reference>
<name>ARGR_VIBCH</name>
<protein>
    <recommendedName>
        <fullName evidence="1">Arginine repressor</fullName>
    </recommendedName>
</protein>
<feature type="chain" id="PRO_0000205139" description="Arginine repressor">
    <location>
        <begin position="1"/>
        <end position="156"/>
    </location>
</feature>
<dbReference type="EMBL" id="AE003852">
    <property type="protein sequence ID" value="AAF93604.1"/>
    <property type="status" value="ALT_INIT"/>
    <property type="molecule type" value="Genomic_DNA"/>
</dbReference>
<dbReference type="PIR" id="F82324">
    <property type="entry name" value="F82324"/>
</dbReference>
<dbReference type="RefSeq" id="NP_230085.2">
    <property type="nucleotide sequence ID" value="NC_002505.1"/>
</dbReference>
<dbReference type="RefSeq" id="WP_001246635.1">
    <property type="nucleotide sequence ID" value="NZ_LT906614.1"/>
</dbReference>
<dbReference type="SMR" id="Q9KUT4"/>
<dbReference type="STRING" id="243277.VC_0431"/>
<dbReference type="DNASU" id="2615692"/>
<dbReference type="EnsemblBacteria" id="AAF93604">
    <property type="protein sequence ID" value="AAF93604"/>
    <property type="gene ID" value="VC_0431"/>
</dbReference>
<dbReference type="GeneID" id="94014777"/>
<dbReference type="KEGG" id="vch:VC_0431"/>
<dbReference type="PATRIC" id="fig|243277.26.peg.405"/>
<dbReference type="eggNOG" id="COG1438">
    <property type="taxonomic scope" value="Bacteria"/>
</dbReference>
<dbReference type="HOGENOM" id="CLU_097103_2_0_6"/>
<dbReference type="UniPathway" id="UPA00068"/>
<dbReference type="Proteomes" id="UP000000584">
    <property type="component" value="Chromosome 1"/>
</dbReference>
<dbReference type="GO" id="GO:0005737">
    <property type="term" value="C:cytoplasm"/>
    <property type="evidence" value="ECO:0007669"/>
    <property type="project" value="UniProtKB-SubCell"/>
</dbReference>
<dbReference type="GO" id="GO:0005667">
    <property type="term" value="C:transcription regulator complex"/>
    <property type="evidence" value="ECO:0000318"/>
    <property type="project" value="GO_Central"/>
</dbReference>
<dbReference type="GO" id="GO:0034618">
    <property type="term" value="F:arginine binding"/>
    <property type="evidence" value="ECO:0007669"/>
    <property type="project" value="InterPro"/>
</dbReference>
<dbReference type="GO" id="GO:0000987">
    <property type="term" value="F:cis-regulatory region sequence-specific DNA binding"/>
    <property type="evidence" value="ECO:0000318"/>
    <property type="project" value="GO_Central"/>
</dbReference>
<dbReference type="GO" id="GO:0003700">
    <property type="term" value="F:DNA-binding transcription factor activity"/>
    <property type="evidence" value="ECO:0007669"/>
    <property type="project" value="UniProtKB-UniRule"/>
</dbReference>
<dbReference type="GO" id="GO:0006526">
    <property type="term" value="P:L-arginine biosynthetic process"/>
    <property type="evidence" value="ECO:0007669"/>
    <property type="project" value="UniProtKB-UniPathway"/>
</dbReference>
<dbReference type="GO" id="GO:0051259">
    <property type="term" value="P:protein complex oligomerization"/>
    <property type="evidence" value="ECO:0007669"/>
    <property type="project" value="InterPro"/>
</dbReference>
<dbReference type="GO" id="GO:1900079">
    <property type="term" value="P:regulation of arginine biosynthetic process"/>
    <property type="evidence" value="ECO:0007669"/>
    <property type="project" value="UniProtKB-UniRule"/>
</dbReference>
<dbReference type="GO" id="GO:0000821">
    <property type="term" value="P:regulation of arginine metabolic process"/>
    <property type="evidence" value="ECO:0000318"/>
    <property type="project" value="GO_Central"/>
</dbReference>
<dbReference type="FunFam" id="1.10.10.10:FF:000074">
    <property type="entry name" value="Arginine repressor"/>
    <property type="match status" value="1"/>
</dbReference>
<dbReference type="Gene3D" id="3.30.1360.40">
    <property type="match status" value="1"/>
</dbReference>
<dbReference type="Gene3D" id="1.10.10.10">
    <property type="entry name" value="Winged helix-like DNA-binding domain superfamily/Winged helix DNA-binding domain"/>
    <property type="match status" value="1"/>
</dbReference>
<dbReference type="HAMAP" id="MF_00173">
    <property type="entry name" value="Arg_repressor"/>
    <property type="match status" value="1"/>
</dbReference>
<dbReference type="InterPro" id="IPR001669">
    <property type="entry name" value="Arg_repress"/>
</dbReference>
<dbReference type="InterPro" id="IPR020899">
    <property type="entry name" value="Arg_repress_C"/>
</dbReference>
<dbReference type="InterPro" id="IPR036251">
    <property type="entry name" value="Arg_repress_C_sf"/>
</dbReference>
<dbReference type="InterPro" id="IPR020900">
    <property type="entry name" value="Arg_repress_DNA-bd"/>
</dbReference>
<dbReference type="InterPro" id="IPR036388">
    <property type="entry name" value="WH-like_DNA-bd_sf"/>
</dbReference>
<dbReference type="InterPro" id="IPR036390">
    <property type="entry name" value="WH_DNA-bd_sf"/>
</dbReference>
<dbReference type="NCBIfam" id="TIGR01529">
    <property type="entry name" value="argR_whole"/>
    <property type="match status" value="1"/>
</dbReference>
<dbReference type="NCBIfam" id="NF003457">
    <property type="entry name" value="PRK05066.1"/>
    <property type="match status" value="1"/>
</dbReference>
<dbReference type="PANTHER" id="PTHR34471">
    <property type="entry name" value="ARGININE REPRESSOR"/>
    <property type="match status" value="1"/>
</dbReference>
<dbReference type="PANTHER" id="PTHR34471:SF1">
    <property type="entry name" value="ARGININE REPRESSOR"/>
    <property type="match status" value="1"/>
</dbReference>
<dbReference type="Pfam" id="PF01316">
    <property type="entry name" value="Arg_repressor"/>
    <property type="match status" value="1"/>
</dbReference>
<dbReference type="Pfam" id="PF02863">
    <property type="entry name" value="Arg_repressor_C"/>
    <property type="match status" value="1"/>
</dbReference>
<dbReference type="PRINTS" id="PR01467">
    <property type="entry name" value="ARGREPRESSOR"/>
</dbReference>
<dbReference type="SUPFAM" id="SSF55252">
    <property type="entry name" value="C-terminal domain of arginine repressor"/>
    <property type="match status" value="1"/>
</dbReference>
<dbReference type="SUPFAM" id="SSF46785">
    <property type="entry name" value="Winged helix' DNA-binding domain"/>
    <property type="match status" value="1"/>
</dbReference>
<keyword id="KW-0028">Amino-acid biosynthesis</keyword>
<keyword id="KW-0055">Arginine biosynthesis</keyword>
<keyword id="KW-0963">Cytoplasm</keyword>
<keyword id="KW-0238">DNA-binding</keyword>
<keyword id="KW-1185">Reference proteome</keyword>
<keyword id="KW-0678">Repressor</keyword>
<keyword id="KW-0804">Transcription</keyword>
<keyword id="KW-0805">Transcription regulation</keyword>
<accession>Q9KUT4</accession>
<gene>
    <name evidence="1" type="primary">argR</name>
    <name type="ordered locus">VC_0431</name>
</gene>
<organism>
    <name type="scientific">Vibrio cholerae serotype O1 (strain ATCC 39315 / El Tor Inaba N16961)</name>
    <dbReference type="NCBI Taxonomy" id="243277"/>
    <lineage>
        <taxon>Bacteria</taxon>
        <taxon>Pseudomonadati</taxon>
        <taxon>Pseudomonadota</taxon>
        <taxon>Gammaproteobacteria</taxon>
        <taxon>Vibrionales</taxon>
        <taxon>Vibrionaceae</taxon>
        <taxon>Vibrio</taxon>
    </lineage>
</organism>
<sequence>MRNVDKQDNLVRAFKALLKEERFGSQGDIVEALKNEGFDNINQSKVSRMLTKFGAVRTRNAKMEMVYCLPAELGVPTASSSLRELVLDVDYNNALVVIRTGPGAAQLIARLLDSLGKSEGILGVVAGDDTIFITPTLDVPVKELFHSVCELFEYAG</sequence>
<comment type="function">
    <text evidence="1">Regulates arginine biosynthesis genes.</text>
</comment>
<comment type="pathway">
    <text>Amino-acid biosynthesis; L-arginine biosynthesis [regulation].</text>
</comment>
<comment type="subcellular location">
    <subcellularLocation>
        <location evidence="1">Cytoplasm</location>
    </subcellularLocation>
</comment>
<comment type="similarity">
    <text evidence="1">Belongs to the ArgR family.</text>
</comment>
<comment type="sequence caution" evidence="2">
    <conflict type="erroneous initiation">
        <sequence resource="EMBL-CDS" id="AAF93604"/>
    </conflict>
</comment>